<gene>
    <name evidence="1" type="primary">rpmF</name>
    <name type="ordered locus">DNO_1205</name>
</gene>
<keyword id="KW-1185">Reference proteome</keyword>
<keyword id="KW-0687">Ribonucleoprotein</keyword>
<keyword id="KW-0689">Ribosomal protein</keyword>
<reference key="1">
    <citation type="journal article" date="2007" name="Nat. Biotechnol.">
        <title>Genome sequence and identification of candidate vaccine antigens from the animal pathogen Dichelobacter nodosus.</title>
        <authorList>
            <person name="Myers G.S.A."/>
            <person name="Parker D."/>
            <person name="Al-Hasani K."/>
            <person name="Kennan R.M."/>
            <person name="Seemann T."/>
            <person name="Ren Q."/>
            <person name="Badger J.H."/>
            <person name="Selengut J.D."/>
            <person name="Deboy R.T."/>
            <person name="Tettelin H."/>
            <person name="Boyce J.D."/>
            <person name="McCarl V.P."/>
            <person name="Han X."/>
            <person name="Nelson W.C."/>
            <person name="Madupu R."/>
            <person name="Mohamoud Y."/>
            <person name="Holley T."/>
            <person name="Fedorova N."/>
            <person name="Khouri H."/>
            <person name="Bottomley S.P."/>
            <person name="Whittington R.J."/>
            <person name="Adler B."/>
            <person name="Songer J.G."/>
            <person name="Rood J.I."/>
            <person name="Paulsen I.T."/>
        </authorList>
    </citation>
    <scope>NUCLEOTIDE SEQUENCE [LARGE SCALE GENOMIC DNA]</scope>
    <source>
        <strain>VCS1703A</strain>
    </source>
</reference>
<proteinExistence type="inferred from homology"/>
<dbReference type="EMBL" id="CP000513">
    <property type="protein sequence ID" value="ABQ13763.1"/>
    <property type="molecule type" value="Genomic_DNA"/>
</dbReference>
<dbReference type="RefSeq" id="WP_012031508.1">
    <property type="nucleotide sequence ID" value="NC_009446.1"/>
</dbReference>
<dbReference type="SMR" id="A5EXD5"/>
<dbReference type="STRING" id="246195.DNO_1205"/>
<dbReference type="KEGG" id="dno:DNO_1205"/>
<dbReference type="eggNOG" id="COG0333">
    <property type="taxonomic scope" value="Bacteria"/>
</dbReference>
<dbReference type="HOGENOM" id="CLU_129084_2_1_6"/>
<dbReference type="OrthoDB" id="9801927at2"/>
<dbReference type="Proteomes" id="UP000000248">
    <property type="component" value="Chromosome"/>
</dbReference>
<dbReference type="GO" id="GO:0015934">
    <property type="term" value="C:large ribosomal subunit"/>
    <property type="evidence" value="ECO:0007669"/>
    <property type="project" value="InterPro"/>
</dbReference>
<dbReference type="GO" id="GO:0003735">
    <property type="term" value="F:structural constituent of ribosome"/>
    <property type="evidence" value="ECO:0007669"/>
    <property type="project" value="InterPro"/>
</dbReference>
<dbReference type="GO" id="GO:0006412">
    <property type="term" value="P:translation"/>
    <property type="evidence" value="ECO:0007669"/>
    <property type="project" value="UniProtKB-UniRule"/>
</dbReference>
<dbReference type="HAMAP" id="MF_00340">
    <property type="entry name" value="Ribosomal_bL32"/>
    <property type="match status" value="1"/>
</dbReference>
<dbReference type="InterPro" id="IPR002677">
    <property type="entry name" value="Ribosomal_bL32"/>
</dbReference>
<dbReference type="InterPro" id="IPR044957">
    <property type="entry name" value="Ribosomal_bL32_bact"/>
</dbReference>
<dbReference type="InterPro" id="IPR011332">
    <property type="entry name" value="Ribosomal_zn-bd"/>
</dbReference>
<dbReference type="NCBIfam" id="TIGR01031">
    <property type="entry name" value="rpmF_bact"/>
    <property type="match status" value="1"/>
</dbReference>
<dbReference type="PANTHER" id="PTHR35534">
    <property type="entry name" value="50S RIBOSOMAL PROTEIN L32"/>
    <property type="match status" value="1"/>
</dbReference>
<dbReference type="PANTHER" id="PTHR35534:SF1">
    <property type="entry name" value="LARGE RIBOSOMAL SUBUNIT PROTEIN BL32"/>
    <property type="match status" value="1"/>
</dbReference>
<dbReference type="Pfam" id="PF01783">
    <property type="entry name" value="Ribosomal_L32p"/>
    <property type="match status" value="1"/>
</dbReference>
<dbReference type="SUPFAM" id="SSF57829">
    <property type="entry name" value="Zn-binding ribosomal proteins"/>
    <property type="match status" value="1"/>
</dbReference>
<feature type="chain" id="PRO_0000296459" description="Large ribosomal subunit protein bL32">
    <location>
        <begin position="1"/>
        <end position="67"/>
    </location>
</feature>
<feature type="region of interest" description="Disordered" evidence="2">
    <location>
        <begin position="1"/>
        <end position="44"/>
    </location>
</feature>
<feature type="compositionally biased region" description="Basic and acidic residues" evidence="2">
    <location>
        <begin position="11"/>
        <end position="20"/>
    </location>
</feature>
<comment type="similarity">
    <text evidence="1">Belongs to the bacterial ribosomal protein bL32 family.</text>
</comment>
<organism>
    <name type="scientific">Dichelobacter nodosus (strain VCS1703A)</name>
    <dbReference type="NCBI Taxonomy" id="246195"/>
    <lineage>
        <taxon>Bacteria</taxon>
        <taxon>Pseudomonadati</taxon>
        <taxon>Pseudomonadota</taxon>
        <taxon>Gammaproteobacteria</taxon>
        <taxon>Cardiobacteriales</taxon>
        <taxon>Cardiobacteriaceae</taxon>
        <taxon>Dichelobacter</taxon>
    </lineage>
</organism>
<sequence>MAVQQNRKSPSKRDMRRSHDALGFSTLSTDSKSGERHRRHHVTKDGFYRGKQVIVHPVESVEVDDEV</sequence>
<name>RL32_DICNV</name>
<evidence type="ECO:0000255" key="1">
    <source>
        <dbReference type="HAMAP-Rule" id="MF_00340"/>
    </source>
</evidence>
<evidence type="ECO:0000256" key="2">
    <source>
        <dbReference type="SAM" id="MobiDB-lite"/>
    </source>
</evidence>
<evidence type="ECO:0000305" key="3"/>
<accession>A5EXD5</accession>
<protein>
    <recommendedName>
        <fullName evidence="1">Large ribosomal subunit protein bL32</fullName>
    </recommendedName>
    <alternativeName>
        <fullName evidence="3">50S ribosomal protein L32</fullName>
    </alternativeName>
</protein>